<sequence>MIAAQFRIQALPTTYLFKEAQALDAFPSVLDKSSLIQRLSIILPKEEDLKFQQALDFLQVENYEAALPLLKDAWELSDKKNSDVALLYAETYIAMKKTEPAQEILNQIPLQDRDSRWHGLQAQIELQIQAADTPEIQQLQADYAKNPTAEIAIKLAVQLHQAGRNEEALTLLFGILKTDLGAQNGEVKQQFLSILSAMGNADPLTNKFRRLLYSLLY</sequence>
<name>Y1159_HAEIN</name>
<accession>P43786</accession>
<proteinExistence type="evidence at protein level"/>
<organism>
    <name type="scientific">Haemophilus influenzae (strain ATCC 51907 / DSM 11121 / KW20 / Rd)</name>
    <dbReference type="NCBI Taxonomy" id="71421"/>
    <lineage>
        <taxon>Bacteria</taxon>
        <taxon>Pseudomonadati</taxon>
        <taxon>Pseudomonadota</taxon>
        <taxon>Gammaproteobacteria</taxon>
        <taxon>Pasteurellales</taxon>
        <taxon>Pasteurellaceae</taxon>
        <taxon>Haemophilus</taxon>
    </lineage>
</organism>
<keyword id="KW-1185">Reference proteome</keyword>
<reference key="1">
    <citation type="journal article" date="1995" name="Science">
        <title>Whole-genome random sequencing and assembly of Haemophilus influenzae Rd.</title>
        <authorList>
            <person name="Fleischmann R.D."/>
            <person name="Adams M.D."/>
            <person name="White O."/>
            <person name="Clayton R.A."/>
            <person name="Kirkness E.F."/>
            <person name="Kerlavage A.R."/>
            <person name="Bult C.J."/>
            <person name="Tomb J.-F."/>
            <person name="Dougherty B.A."/>
            <person name="Merrick J.M."/>
            <person name="McKenney K."/>
            <person name="Sutton G.G."/>
            <person name="FitzHugh W."/>
            <person name="Fields C.A."/>
            <person name="Gocayne J.D."/>
            <person name="Scott J.D."/>
            <person name="Shirley R."/>
            <person name="Liu L.-I."/>
            <person name="Glodek A."/>
            <person name="Kelley J.M."/>
            <person name="Weidman J.F."/>
            <person name="Phillips C.A."/>
            <person name="Spriggs T."/>
            <person name="Hedblom E."/>
            <person name="Cotton M.D."/>
            <person name="Utterback T.R."/>
            <person name="Hanna M.C."/>
            <person name="Nguyen D.T."/>
            <person name="Saudek D.M."/>
            <person name="Brandon R.C."/>
            <person name="Fine L.D."/>
            <person name="Fritchman J.L."/>
            <person name="Fuhrmann J.L."/>
            <person name="Geoghagen N.S.M."/>
            <person name="Gnehm C.L."/>
            <person name="McDonald L.A."/>
            <person name="Small K.V."/>
            <person name="Fraser C.M."/>
            <person name="Smith H.O."/>
            <person name="Venter J.C."/>
        </authorList>
    </citation>
    <scope>NUCLEOTIDE SEQUENCE [LARGE SCALE GENOMIC DNA]</scope>
    <source>
        <strain>ATCC 51907 / DSM 11121 / KW20 / Rd</strain>
    </source>
</reference>
<reference key="2">
    <citation type="journal article" date="2000" name="Electrophoresis">
        <title>Two-dimensional map of the proteome of Haemophilus influenzae.</title>
        <authorList>
            <person name="Langen H."/>
            <person name="Takacs B."/>
            <person name="Evers S."/>
            <person name="Berndt P."/>
            <person name="Lahm H.W."/>
            <person name="Wipf B."/>
            <person name="Gray C."/>
            <person name="Fountoulakis M."/>
        </authorList>
    </citation>
    <scope>IDENTIFICATION BY MASS SPECTROMETRY</scope>
    <source>
        <strain>ATCC 51907 / DSM 11121 / KW20 / Rd</strain>
    </source>
</reference>
<dbReference type="EMBL" id="L42023">
    <property type="protein sequence ID" value="AAC22814.1"/>
    <property type="molecule type" value="Genomic_DNA"/>
</dbReference>
<dbReference type="PIR" id="H64186">
    <property type="entry name" value="H64186"/>
</dbReference>
<dbReference type="RefSeq" id="NP_439317.2">
    <property type="nucleotide sequence ID" value="NC_000907.1"/>
</dbReference>
<dbReference type="SMR" id="P43786"/>
<dbReference type="STRING" id="71421.HI_1159"/>
<dbReference type="DNASU" id="950110"/>
<dbReference type="EnsemblBacteria" id="AAC22814">
    <property type="protein sequence ID" value="AAC22814"/>
    <property type="gene ID" value="HI_1159"/>
</dbReference>
<dbReference type="KEGG" id="hin:HI_1159"/>
<dbReference type="PATRIC" id="fig|71421.8.peg.1210"/>
<dbReference type="eggNOG" id="COG3118">
    <property type="taxonomic scope" value="Bacteria"/>
</dbReference>
<dbReference type="HOGENOM" id="CLU_046120_1_0_6"/>
<dbReference type="OrthoDB" id="9790390at2"/>
<dbReference type="PhylomeDB" id="P43786"/>
<dbReference type="Proteomes" id="UP000000579">
    <property type="component" value="Chromosome"/>
</dbReference>
<dbReference type="Gene3D" id="1.25.40.10">
    <property type="entry name" value="Tetratricopeptide repeat domain"/>
    <property type="match status" value="2"/>
</dbReference>
<dbReference type="InterPro" id="IPR011990">
    <property type="entry name" value="TPR-like_helical_dom_sf"/>
</dbReference>
<dbReference type="Pfam" id="PF14559">
    <property type="entry name" value="TPR_19"/>
    <property type="match status" value="1"/>
</dbReference>
<dbReference type="Pfam" id="PF14561">
    <property type="entry name" value="TPR_20"/>
    <property type="match status" value="1"/>
</dbReference>
<dbReference type="SUPFAM" id="SSF48452">
    <property type="entry name" value="TPR-like"/>
    <property type="match status" value="1"/>
</dbReference>
<gene>
    <name type="ordered locus">HI_1159</name>
</gene>
<protein>
    <recommendedName>
        <fullName>Uncharacterized protein HI_1159</fullName>
    </recommendedName>
</protein>
<feature type="chain" id="PRO_0000168641" description="Uncharacterized protein HI_1159">
    <location>
        <begin position="1"/>
        <end position="217"/>
    </location>
</feature>